<organism>
    <name type="scientific">Burkholderia multivorans (strain ATCC 17616 / 249)</name>
    <dbReference type="NCBI Taxonomy" id="395019"/>
    <lineage>
        <taxon>Bacteria</taxon>
        <taxon>Pseudomonadati</taxon>
        <taxon>Pseudomonadota</taxon>
        <taxon>Betaproteobacteria</taxon>
        <taxon>Burkholderiales</taxon>
        <taxon>Burkholderiaceae</taxon>
        <taxon>Burkholderia</taxon>
        <taxon>Burkholderia cepacia complex</taxon>
    </lineage>
</organism>
<feature type="chain" id="PRO_1000089710" description="Recombination protein RecR">
    <location>
        <begin position="1"/>
        <end position="198"/>
    </location>
</feature>
<feature type="domain" description="Toprim" evidence="1">
    <location>
        <begin position="80"/>
        <end position="175"/>
    </location>
</feature>
<feature type="zinc finger region" description="C4-type" evidence="1">
    <location>
        <begin position="57"/>
        <end position="72"/>
    </location>
</feature>
<evidence type="ECO:0000255" key="1">
    <source>
        <dbReference type="HAMAP-Rule" id="MF_00017"/>
    </source>
</evidence>
<gene>
    <name evidence="1" type="primary">recR</name>
    <name type="ordered locus">Bmul_1448</name>
    <name type="ordered locus">BMULJ_01795</name>
</gene>
<sequence length="198" mass="21913">MKQPSALSALVEALRALPGVGPKSAQRMAYHLMQHDREGAERLGRSLLFATEHLRHCDKCNTFTEAQICEVCSDEERDPTLLCVVETPADQIMLEQTMTYRGLYFVLMGRLSPLDGIGPKEIHFDRLVRRASDGIVKEVVLATNFTNEGEATAHYLGQTLKARGLAVTRLARGVPVGGELEYVDAGTIARAMLDRRTM</sequence>
<name>RECR_BURM1</name>
<dbReference type="EMBL" id="CP000868">
    <property type="protein sequence ID" value="ABX15136.1"/>
    <property type="molecule type" value="Genomic_DNA"/>
</dbReference>
<dbReference type="EMBL" id="AP009385">
    <property type="protein sequence ID" value="BAG43715.1"/>
    <property type="molecule type" value="Genomic_DNA"/>
</dbReference>
<dbReference type="RefSeq" id="WP_006399892.1">
    <property type="nucleotide sequence ID" value="NC_010804.1"/>
</dbReference>
<dbReference type="SMR" id="A9AGY1"/>
<dbReference type="STRING" id="395019.BMULJ_01795"/>
<dbReference type="GeneID" id="89570274"/>
<dbReference type="KEGG" id="bmj:BMULJ_01795"/>
<dbReference type="KEGG" id="bmu:Bmul_1448"/>
<dbReference type="eggNOG" id="COG0353">
    <property type="taxonomic scope" value="Bacteria"/>
</dbReference>
<dbReference type="HOGENOM" id="CLU_060739_1_2_4"/>
<dbReference type="Proteomes" id="UP000008815">
    <property type="component" value="Chromosome 1"/>
</dbReference>
<dbReference type="GO" id="GO:0003677">
    <property type="term" value="F:DNA binding"/>
    <property type="evidence" value="ECO:0007669"/>
    <property type="project" value="UniProtKB-UniRule"/>
</dbReference>
<dbReference type="GO" id="GO:0008270">
    <property type="term" value="F:zinc ion binding"/>
    <property type="evidence" value="ECO:0007669"/>
    <property type="project" value="UniProtKB-KW"/>
</dbReference>
<dbReference type="GO" id="GO:0006310">
    <property type="term" value="P:DNA recombination"/>
    <property type="evidence" value="ECO:0007669"/>
    <property type="project" value="UniProtKB-UniRule"/>
</dbReference>
<dbReference type="GO" id="GO:0006281">
    <property type="term" value="P:DNA repair"/>
    <property type="evidence" value="ECO:0007669"/>
    <property type="project" value="UniProtKB-UniRule"/>
</dbReference>
<dbReference type="CDD" id="cd01025">
    <property type="entry name" value="TOPRIM_recR"/>
    <property type="match status" value="1"/>
</dbReference>
<dbReference type="Gene3D" id="3.40.1360.10">
    <property type="match status" value="1"/>
</dbReference>
<dbReference type="Gene3D" id="6.10.250.240">
    <property type="match status" value="1"/>
</dbReference>
<dbReference type="Gene3D" id="1.10.8.420">
    <property type="entry name" value="RecR Domain 1"/>
    <property type="match status" value="1"/>
</dbReference>
<dbReference type="HAMAP" id="MF_00017">
    <property type="entry name" value="RecR"/>
    <property type="match status" value="1"/>
</dbReference>
<dbReference type="InterPro" id="IPR000093">
    <property type="entry name" value="DNA_Rcmb_RecR"/>
</dbReference>
<dbReference type="InterPro" id="IPR023627">
    <property type="entry name" value="Rcmb_RecR"/>
</dbReference>
<dbReference type="InterPro" id="IPR015967">
    <property type="entry name" value="Rcmb_RecR_Znf"/>
</dbReference>
<dbReference type="InterPro" id="IPR006171">
    <property type="entry name" value="TOPRIM_dom"/>
</dbReference>
<dbReference type="InterPro" id="IPR034137">
    <property type="entry name" value="TOPRIM_RecR"/>
</dbReference>
<dbReference type="NCBIfam" id="TIGR00615">
    <property type="entry name" value="recR"/>
    <property type="match status" value="1"/>
</dbReference>
<dbReference type="PANTHER" id="PTHR30446">
    <property type="entry name" value="RECOMBINATION PROTEIN RECR"/>
    <property type="match status" value="1"/>
</dbReference>
<dbReference type="PANTHER" id="PTHR30446:SF0">
    <property type="entry name" value="RECOMBINATION PROTEIN RECR"/>
    <property type="match status" value="1"/>
</dbReference>
<dbReference type="Pfam" id="PF21175">
    <property type="entry name" value="RecR_C"/>
    <property type="match status" value="1"/>
</dbReference>
<dbReference type="Pfam" id="PF21176">
    <property type="entry name" value="RecR_HhH"/>
    <property type="match status" value="1"/>
</dbReference>
<dbReference type="Pfam" id="PF02132">
    <property type="entry name" value="RecR_ZnF"/>
    <property type="match status" value="1"/>
</dbReference>
<dbReference type="Pfam" id="PF13662">
    <property type="entry name" value="Toprim_4"/>
    <property type="match status" value="1"/>
</dbReference>
<dbReference type="SMART" id="SM00493">
    <property type="entry name" value="TOPRIM"/>
    <property type="match status" value="1"/>
</dbReference>
<dbReference type="SUPFAM" id="SSF111304">
    <property type="entry name" value="Recombination protein RecR"/>
    <property type="match status" value="1"/>
</dbReference>
<dbReference type="PROSITE" id="PS01300">
    <property type="entry name" value="RECR"/>
    <property type="match status" value="1"/>
</dbReference>
<dbReference type="PROSITE" id="PS50880">
    <property type="entry name" value="TOPRIM"/>
    <property type="match status" value="1"/>
</dbReference>
<accession>A9AGY1</accession>
<comment type="function">
    <text evidence="1">May play a role in DNA repair. It seems to be involved in an RecBC-independent recombinational process of DNA repair. It may act with RecF and RecO.</text>
</comment>
<comment type="similarity">
    <text evidence="1">Belongs to the RecR family.</text>
</comment>
<keyword id="KW-0227">DNA damage</keyword>
<keyword id="KW-0233">DNA recombination</keyword>
<keyword id="KW-0234">DNA repair</keyword>
<keyword id="KW-0479">Metal-binding</keyword>
<keyword id="KW-1185">Reference proteome</keyword>
<keyword id="KW-0862">Zinc</keyword>
<keyword id="KW-0863">Zinc-finger</keyword>
<protein>
    <recommendedName>
        <fullName evidence="1">Recombination protein RecR</fullName>
    </recommendedName>
</protein>
<proteinExistence type="inferred from homology"/>
<reference key="1">
    <citation type="submission" date="2007-10" db="EMBL/GenBank/DDBJ databases">
        <title>Complete sequence of chromosome 1 of Burkholderia multivorans ATCC 17616.</title>
        <authorList>
            <person name="Copeland A."/>
            <person name="Lucas S."/>
            <person name="Lapidus A."/>
            <person name="Barry K."/>
            <person name="Glavina del Rio T."/>
            <person name="Dalin E."/>
            <person name="Tice H."/>
            <person name="Pitluck S."/>
            <person name="Chain P."/>
            <person name="Malfatti S."/>
            <person name="Shin M."/>
            <person name="Vergez L."/>
            <person name="Schmutz J."/>
            <person name="Larimer F."/>
            <person name="Land M."/>
            <person name="Hauser L."/>
            <person name="Kyrpides N."/>
            <person name="Kim E."/>
            <person name="Tiedje J."/>
            <person name="Richardson P."/>
        </authorList>
    </citation>
    <scope>NUCLEOTIDE SEQUENCE [LARGE SCALE GENOMIC DNA]</scope>
    <source>
        <strain>ATCC 17616 / 249</strain>
    </source>
</reference>
<reference key="2">
    <citation type="submission" date="2007-04" db="EMBL/GenBank/DDBJ databases">
        <title>Complete genome sequence of Burkholderia multivorans ATCC 17616.</title>
        <authorList>
            <person name="Ohtsubo Y."/>
            <person name="Yamashita A."/>
            <person name="Kurokawa K."/>
            <person name="Takami H."/>
            <person name="Yuhara S."/>
            <person name="Nishiyama E."/>
            <person name="Endo R."/>
            <person name="Miyazaki R."/>
            <person name="Ono A."/>
            <person name="Yano K."/>
            <person name="Ito M."/>
            <person name="Sota M."/>
            <person name="Yuji N."/>
            <person name="Hattori M."/>
            <person name="Tsuda M."/>
        </authorList>
    </citation>
    <scope>NUCLEOTIDE SEQUENCE [LARGE SCALE GENOMIC DNA]</scope>
    <source>
        <strain>ATCC 17616 / 249</strain>
    </source>
</reference>